<proteinExistence type="inferred from homology"/>
<geneLocation type="chloroplast"/>
<organism>
    <name type="scientific">Cicer arietinum</name>
    <name type="common">Chickpea</name>
    <name type="synonym">Garbanzo</name>
    <dbReference type="NCBI Taxonomy" id="3827"/>
    <lineage>
        <taxon>Eukaryota</taxon>
        <taxon>Viridiplantae</taxon>
        <taxon>Streptophyta</taxon>
        <taxon>Embryophyta</taxon>
        <taxon>Tracheophyta</taxon>
        <taxon>Spermatophyta</taxon>
        <taxon>Magnoliopsida</taxon>
        <taxon>eudicotyledons</taxon>
        <taxon>Gunneridae</taxon>
        <taxon>Pentapetalae</taxon>
        <taxon>rosids</taxon>
        <taxon>fabids</taxon>
        <taxon>Fabales</taxon>
        <taxon>Fabaceae</taxon>
        <taxon>Papilionoideae</taxon>
        <taxon>50 kb inversion clade</taxon>
        <taxon>NPAAA clade</taxon>
        <taxon>Hologalegina</taxon>
        <taxon>IRL clade</taxon>
        <taxon>Cicereae</taxon>
        <taxon>Cicer</taxon>
    </lineage>
</organism>
<keyword id="KW-0066">ATP synthesis</keyword>
<keyword id="KW-0138">CF(0)</keyword>
<keyword id="KW-0150">Chloroplast</keyword>
<keyword id="KW-0375">Hydrogen ion transport</keyword>
<keyword id="KW-0406">Ion transport</keyword>
<keyword id="KW-0446">Lipid-binding</keyword>
<keyword id="KW-0472">Membrane</keyword>
<keyword id="KW-0934">Plastid</keyword>
<keyword id="KW-1185">Reference proteome</keyword>
<keyword id="KW-0793">Thylakoid</keyword>
<keyword id="KW-0812">Transmembrane</keyword>
<keyword id="KW-1133">Transmembrane helix</keyword>
<keyword id="KW-0813">Transport</keyword>
<dbReference type="EMBL" id="EU835853">
    <property type="protein sequence ID" value="ACH41075.1"/>
    <property type="molecule type" value="Genomic_DNA"/>
</dbReference>
<dbReference type="RefSeq" id="YP_002149738.1">
    <property type="nucleotide sequence ID" value="NC_011163.1"/>
</dbReference>
<dbReference type="SMR" id="B5LMM9"/>
<dbReference type="GeneID" id="6797489"/>
<dbReference type="KEGG" id="cam:6797489"/>
<dbReference type="OrthoDB" id="1423239at2759"/>
<dbReference type="Proteomes" id="UP000087171">
    <property type="component" value="Chloroplast Pltd"/>
</dbReference>
<dbReference type="GO" id="GO:0009535">
    <property type="term" value="C:chloroplast thylakoid membrane"/>
    <property type="evidence" value="ECO:0007669"/>
    <property type="project" value="UniProtKB-SubCell"/>
</dbReference>
<dbReference type="GO" id="GO:0045259">
    <property type="term" value="C:proton-transporting ATP synthase complex"/>
    <property type="evidence" value="ECO:0007669"/>
    <property type="project" value="UniProtKB-KW"/>
</dbReference>
<dbReference type="GO" id="GO:0033177">
    <property type="term" value="C:proton-transporting two-sector ATPase complex, proton-transporting domain"/>
    <property type="evidence" value="ECO:0007669"/>
    <property type="project" value="InterPro"/>
</dbReference>
<dbReference type="GO" id="GO:0008289">
    <property type="term" value="F:lipid binding"/>
    <property type="evidence" value="ECO:0007669"/>
    <property type="project" value="UniProtKB-KW"/>
</dbReference>
<dbReference type="GO" id="GO:0046933">
    <property type="term" value="F:proton-transporting ATP synthase activity, rotational mechanism"/>
    <property type="evidence" value="ECO:0007669"/>
    <property type="project" value="UniProtKB-UniRule"/>
</dbReference>
<dbReference type="CDD" id="cd18183">
    <property type="entry name" value="ATP-synt_Fo_c_ATPH"/>
    <property type="match status" value="1"/>
</dbReference>
<dbReference type="FunFam" id="1.20.20.10:FF:000001">
    <property type="entry name" value="ATP synthase subunit c, chloroplastic"/>
    <property type="match status" value="1"/>
</dbReference>
<dbReference type="Gene3D" id="1.20.20.10">
    <property type="entry name" value="F1F0 ATP synthase subunit C"/>
    <property type="match status" value="1"/>
</dbReference>
<dbReference type="HAMAP" id="MF_01396">
    <property type="entry name" value="ATP_synth_c_bact"/>
    <property type="match status" value="1"/>
</dbReference>
<dbReference type="InterPro" id="IPR005953">
    <property type="entry name" value="ATP_synth_csu_bac/chlpt"/>
</dbReference>
<dbReference type="InterPro" id="IPR000454">
    <property type="entry name" value="ATP_synth_F0_csu"/>
</dbReference>
<dbReference type="InterPro" id="IPR020537">
    <property type="entry name" value="ATP_synth_F0_csu_DDCD_BS"/>
</dbReference>
<dbReference type="InterPro" id="IPR038662">
    <property type="entry name" value="ATP_synth_F0_csu_sf"/>
</dbReference>
<dbReference type="InterPro" id="IPR002379">
    <property type="entry name" value="ATPase_proteolipid_c-like_dom"/>
</dbReference>
<dbReference type="InterPro" id="IPR035921">
    <property type="entry name" value="F/V-ATP_Csub_sf"/>
</dbReference>
<dbReference type="NCBIfam" id="TIGR01260">
    <property type="entry name" value="ATP_synt_c"/>
    <property type="match status" value="1"/>
</dbReference>
<dbReference type="NCBIfam" id="NF005608">
    <property type="entry name" value="PRK07354.1"/>
    <property type="match status" value="1"/>
</dbReference>
<dbReference type="PANTHER" id="PTHR10031">
    <property type="entry name" value="ATP SYNTHASE LIPID-BINDING PROTEIN, MITOCHONDRIAL"/>
    <property type="match status" value="1"/>
</dbReference>
<dbReference type="PANTHER" id="PTHR10031:SF0">
    <property type="entry name" value="ATPASE PROTEIN 9"/>
    <property type="match status" value="1"/>
</dbReference>
<dbReference type="Pfam" id="PF00137">
    <property type="entry name" value="ATP-synt_C"/>
    <property type="match status" value="1"/>
</dbReference>
<dbReference type="PRINTS" id="PR00124">
    <property type="entry name" value="ATPASEC"/>
</dbReference>
<dbReference type="SUPFAM" id="SSF81333">
    <property type="entry name" value="F1F0 ATP synthase subunit C"/>
    <property type="match status" value="1"/>
</dbReference>
<dbReference type="PROSITE" id="PS00605">
    <property type="entry name" value="ATPASE_C"/>
    <property type="match status" value="1"/>
</dbReference>
<sequence>MNPIISAASVIAAGLAVGLASIGPGIGQGTAAGQAVEGIARQPEAEDKIRGTLLLSLAFMEALTIYGLVVALALLFANPFV</sequence>
<feature type="chain" id="PRO_0000362900" description="ATP synthase subunit c, chloroplastic">
    <location>
        <begin position="1"/>
        <end position="81"/>
    </location>
</feature>
<feature type="transmembrane region" description="Helical" evidence="1">
    <location>
        <begin position="3"/>
        <end position="23"/>
    </location>
</feature>
<feature type="transmembrane region" description="Helical" evidence="1">
    <location>
        <begin position="57"/>
        <end position="77"/>
    </location>
</feature>
<feature type="site" description="Reversibly protonated during proton transport" evidence="1">
    <location>
        <position position="61"/>
    </location>
</feature>
<evidence type="ECO:0000255" key="1">
    <source>
        <dbReference type="HAMAP-Rule" id="MF_01396"/>
    </source>
</evidence>
<comment type="function">
    <text evidence="1">F(1)F(0) ATP synthase produces ATP from ADP in the presence of a proton or sodium gradient. F-type ATPases consist of two structural domains, F(1) containing the extramembraneous catalytic core and F(0) containing the membrane proton channel, linked together by a central stalk and a peripheral stalk. During catalysis, ATP synthesis in the catalytic domain of F(1) is coupled via a rotary mechanism of the central stalk subunits to proton translocation.</text>
</comment>
<comment type="function">
    <text evidence="1">Key component of the F(0) channel; it plays a direct role in translocation across the membrane. A homomeric c-ring of between 10-14 subunits forms the central stalk rotor element with the F(1) delta and epsilon subunits.</text>
</comment>
<comment type="subunit">
    <text evidence="1">F-type ATPases have 2 components, F(1) - the catalytic core - and F(0) - the membrane proton channel. F(1) has five subunits: alpha(3), beta(3), gamma(1), delta(1), epsilon(1). F(0) has four main subunits: a(1), b(1), b'(1) and c(10-14). The alpha and beta chains form an alternating ring which encloses part of the gamma chain. F(1) is attached to F(0) by a central stalk formed by the gamma and epsilon chains, while a peripheral stalk is formed by the delta, b and b' chains.</text>
</comment>
<comment type="subcellular location">
    <subcellularLocation>
        <location evidence="1">Plastid</location>
        <location evidence="1">Chloroplast thylakoid membrane</location>
        <topology evidence="1">Multi-pass membrane protein</topology>
    </subcellularLocation>
</comment>
<comment type="miscellaneous">
    <text>In plastids the F-type ATPase is also known as CF(1)CF(0).</text>
</comment>
<comment type="similarity">
    <text evidence="1">Belongs to the ATPase C chain family.</text>
</comment>
<protein>
    <recommendedName>
        <fullName evidence="1">ATP synthase subunit c, chloroplastic</fullName>
    </recommendedName>
    <alternativeName>
        <fullName evidence="1">ATP synthase F(0) sector subunit c</fullName>
    </alternativeName>
    <alternativeName>
        <fullName evidence="1">ATPase subunit III</fullName>
    </alternativeName>
    <alternativeName>
        <fullName evidence="1">F-type ATPase subunit c</fullName>
        <shortName evidence="1">F-ATPase subunit c</shortName>
    </alternativeName>
    <alternativeName>
        <fullName evidence="1">Lipid-binding protein</fullName>
    </alternativeName>
</protein>
<accession>B5LMM9</accession>
<name>ATPH_CICAR</name>
<reference key="1">
    <citation type="journal article" date="2008" name="Mol. Phylogenet. Evol.">
        <title>Complete plastid genome sequence of the chickpea (Cicer arietinum) and the phylogenetic distribution of rps12 and clpP intron losses among legumes (Leguminosae).</title>
        <authorList>
            <person name="Jansen R.K."/>
            <person name="Wojciechowski M.F."/>
            <person name="Sanniyasi E."/>
            <person name="Lee S.-B."/>
            <person name="Daniell H."/>
        </authorList>
    </citation>
    <scope>NUCLEOTIDE SEQUENCE [LARGE SCALE GENOMIC DNA]</scope>
</reference>
<gene>
    <name evidence="1" type="primary">atpH</name>
</gene>